<keyword id="KW-0456">Lyase</keyword>
<keyword id="KW-0460">Magnesium</keyword>
<keyword id="KW-0479">Metal-binding</keyword>
<keyword id="KW-0614">Plasmid</keyword>
<keyword id="KW-1185">Reference proteome</keyword>
<gene>
    <name type="ORF">SCreLAV_p0328</name>
    <name type="ORF">SSCG_02150</name>
</gene>
<accession>B5GS26</accession>
<organism>
    <name type="scientific">Streptomyces clavuligerus</name>
    <dbReference type="NCBI Taxonomy" id="1901"/>
    <lineage>
        <taxon>Bacteria</taxon>
        <taxon>Bacillati</taxon>
        <taxon>Actinomycetota</taxon>
        <taxon>Actinomycetes</taxon>
        <taxon>Kitasatosporales</taxon>
        <taxon>Streptomycetaceae</taxon>
        <taxon>Streptomyces</taxon>
    </lineage>
</organism>
<protein>
    <recommendedName>
        <fullName>(-)-delta-cadinene synthase</fullName>
        <ecNumber>4.2.3.97</ecNumber>
    </recommendedName>
</protein>
<sequence>MSTRPVEGSAIWDVLSPHSPHAAAADGKTLVWVEAGELCGHDTAESANLARIRPGLLAAFCHPKATEDDLTLITKWMAWLFLLDDRIDESDLGRDADLLDGHLQDLQGVALGIRTASGPMSRALEEIITQASAGMGDAWQLRFRRNISDYLLACVWQAAHRQAGEFPDPEVFPHWRRAFGAIMPSFDLIERTDGGALPSCVYYSRPYQSLLTAAADLVCWTNDLMTVDKEAAHGDLHNLVLVTEHDRHQDRRTASAAVSAACEQRMRAHTSARRDLTGLTAALGLPDTVRTHADDCAASLLVWVRGHLEWGLETPRYRPGTTGTGTD</sequence>
<dbReference type="EC" id="4.2.3.97"/>
<dbReference type="EMBL" id="CM000914">
    <property type="protein sequence ID" value="EFG03819.2"/>
    <property type="molecule type" value="Genomic_DNA"/>
</dbReference>
<dbReference type="EMBL" id="DS570637">
    <property type="protein sequence ID" value="EDY49122.1"/>
    <property type="molecule type" value="Genomic_DNA"/>
</dbReference>
<dbReference type="RefSeq" id="WP_003954606.1">
    <property type="nucleotide sequence ID" value="NZ_CM000914.1"/>
</dbReference>
<dbReference type="SMR" id="B5GS26"/>
<dbReference type="GeneID" id="93733508"/>
<dbReference type="KEGG" id="ag:EFG03819"/>
<dbReference type="eggNOG" id="ENOG502Z881">
    <property type="taxonomic scope" value="Bacteria"/>
</dbReference>
<dbReference type="OrthoDB" id="3676909at2"/>
<dbReference type="BRENDA" id="4.2.3.97">
    <property type="organism ID" value="5988"/>
</dbReference>
<dbReference type="Proteomes" id="UP000002357">
    <property type="component" value="Plasmid pSCL4"/>
</dbReference>
<dbReference type="GO" id="GO:0046872">
    <property type="term" value="F:metal ion binding"/>
    <property type="evidence" value="ECO:0007669"/>
    <property type="project" value="UniProtKB-KW"/>
</dbReference>
<dbReference type="GO" id="GO:0010333">
    <property type="term" value="F:terpene synthase activity"/>
    <property type="evidence" value="ECO:0007669"/>
    <property type="project" value="InterPro"/>
</dbReference>
<dbReference type="Gene3D" id="1.10.600.10">
    <property type="entry name" value="Farnesyl Diphosphate Synthase"/>
    <property type="match status" value="1"/>
</dbReference>
<dbReference type="InterPro" id="IPR008949">
    <property type="entry name" value="Isoprenoid_synthase_dom_sf"/>
</dbReference>
<dbReference type="InterPro" id="IPR034686">
    <property type="entry name" value="Terpene_cyclase-like_2"/>
</dbReference>
<dbReference type="PANTHER" id="PTHR35201:SF4">
    <property type="entry name" value="BETA-PINACENE SYNTHASE-RELATED"/>
    <property type="match status" value="1"/>
</dbReference>
<dbReference type="PANTHER" id="PTHR35201">
    <property type="entry name" value="TERPENE SYNTHASE"/>
    <property type="match status" value="1"/>
</dbReference>
<dbReference type="Pfam" id="PF19086">
    <property type="entry name" value="Terpene_syn_C_2"/>
    <property type="match status" value="1"/>
</dbReference>
<dbReference type="SUPFAM" id="SSF48576">
    <property type="entry name" value="Terpenoid synthases"/>
    <property type="match status" value="1"/>
</dbReference>
<proteinExistence type="evidence at protein level"/>
<reference key="1">
    <citation type="journal article" date="2010" name="Genome Biol. Evol.">
        <title>The sequence of a 1.8-mb bacterial linear plasmid reveals a rich evolutionary reservoir of secondary metabolic pathways.</title>
        <authorList>
            <person name="Medema M.H."/>
            <person name="Trefzer A."/>
            <person name="Kovalchuk A."/>
            <person name="van den Berg M."/>
            <person name="Mueller U."/>
            <person name="Heijne W."/>
            <person name="Wu L."/>
            <person name="Alam M.T."/>
            <person name="Ronning C.M."/>
            <person name="Nierman W.C."/>
            <person name="Bovenberg R.A.L."/>
            <person name="Breitling R."/>
            <person name="Takano E."/>
        </authorList>
    </citation>
    <scope>NUCLEOTIDE SEQUENCE [LARGE SCALE GENOMIC DNA]</scope>
    <source>
        <strain>ATCC 27064 / DSM 738 / JCM 4710 / NBRC 13307 / NCIMB 12785 / NRRL 3585 / VKM Ac-602</strain>
        <plasmid>pSCL4</plasmid>
    </source>
</reference>
<reference key="2">
    <citation type="submission" date="2008-02" db="EMBL/GenBank/DDBJ databases">
        <title>Annotation of Streptomyces clavuligerus ATCC 27064.</title>
        <authorList>
            <person name="Fischbach M."/>
            <person name="Ward D."/>
            <person name="Young S."/>
            <person name="Jaffe D."/>
            <person name="Gnerre S."/>
            <person name="Berlin A."/>
            <person name="Heiman D."/>
            <person name="Hepburn T."/>
            <person name="Sykes S."/>
            <person name="Alvarado L."/>
            <person name="Kodira C.D."/>
            <person name="Straight P."/>
            <person name="Clardy J."/>
            <person name="Hung D."/>
            <person name="Kolter R."/>
            <person name="Mekalanos J."/>
            <person name="Walker S."/>
            <person name="Walsh C.T."/>
            <person name="Lander E."/>
            <person name="Galagan J."/>
            <person name="Nusbaum C."/>
            <person name="Birren B."/>
        </authorList>
    </citation>
    <scope>NUCLEOTIDE SEQUENCE [LARGE SCALE GENOMIC DNA]</scope>
    <source>
        <strain>ATCC 27064 / DSM 738 / JCM 4710 / NBRC 13307 / NCIMB 12785 / NRRL 3585 / VKM Ac-602</strain>
    </source>
</reference>
<reference key="3">
    <citation type="journal article" date="2011" name="Chem. Biol.">
        <title>Genome mining in Streptomyces clavuligerus: expression and biochemical characterization of two new cryptic sesquiterpene synthases.</title>
        <authorList>
            <person name="Hu Y."/>
            <person name="Chou W.K."/>
            <person name="Hopson R."/>
            <person name="Cane D.E."/>
        </authorList>
    </citation>
    <scope>FUNCTION</scope>
    <scope>CATALYTIC ACTIVITY</scope>
    <scope>BIOPHYSICOCHEMICAL PROPERTIES</scope>
    <source>
        <strain>ATCC 27064 / DSM 738 / JCM 4710 / NBRC 13307 / NCIMB 12785 / NRRL 3585 / VKM Ac-602</strain>
    </source>
</reference>
<evidence type="ECO:0000250" key="1"/>
<evidence type="ECO:0000269" key="2">
    <source>
    </source>
</evidence>
<evidence type="ECO:0000305" key="3"/>
<name>DCADS_STRCL</name>
<geneLocation type="plasmid">
    <name>pSCL4</name>
</geneLocation>
<feature type="chain" id="PRO_0000418477" description="(-)-delta-cadinene synthase">
    <location>
        <begin position="1"/>
        <end position="327"/>
    </location>
</feature>
<feature type="binding site" evidence="1">
    <location>
        <position position="84"/>
    </location>
    <ligand>
        <name>Mg(2+)</name>
        <dbReference type="ChEBI" id="CHEBI:18420"/>
    </ligand>
</feature>
<feature type="binding site" evidence="1">
    <location>
        <position position="85"/>
    </location>
    <ligand>
        <name>Mg(2+)</name>
        <dbReference type="ChEBI" id="CHEBI:18420"/>
    </ligand>
</feature>
<feature type="binding site" evidence="1">
    <location>
        <position position="222"/>
    </location>
    <ligand>
        <name>Mg(2+)</name>
        <dbReference type="ChEBI" id="CHEBI:18420"/>
    </ligand>
</feature>
<feature type="binding site" evidence="1">
    <location>
        <position position="226"/>
    </location>
    <ligand>
        <name>Mg(2+)</name>
        <dbReference type="ChEBI" id="CHEBI:18420"/>
    </ligand>
</feature>
<feature type="binding site" evidence="1">
    <location>
        <position position="230"/>
    </location>
    <ligand>
        <name>Mg(2+)</name>
        <dbReference type="ChEBI" id="CHEBI:18420"/>
    </ligand>
</feature>
<comment type="function">
    <text evidence="2">Catalyzes the conversion of (2E,6E)-farnesyl diphosphate into (-)-delta-cadinene. Cyclization mechanism involves an intermediate nerolidyl diphosphate leading to a helminthogermacradienyl cation.</text>
</comment>
<comment type="catalytic activity">
    <reaction evidence="2">
        <text>(2E,6E)-farnesyl diphosphate = (-)-delta-cadinene + diphosphate</text>
        <dbReference type="Rhea" id="RHEA:32015"/>
        <dbReference type="ChEBI" id="CHEBI:33019"/>
        <dbReference type="ChEBI" id="CHEBI:63703"/>
        <dbReference type="ChEBI" id="CHEBI:175763"/>
        <dbReference type="EC" id="4.2.3.97"/>
    </reaction>
</comment>
<comment type="biophysicochemical properties">
    <kinetics>
        <KM evidence="2">1.4 uM for (2E,6E)-farnesyl diphosphate</KM>
        <text>kcat is 0.00114 sec(-1).</text>
    </kinetics>
</comment>
<comment type="similarity">
    <text evidence="3">Belongs to the terpene synthase family.</text>
</comment>